<keyword id="KW-0002">3D-structure</keyword>
<keyword id="KW-0007">Acetylation</keyword>
<keyword id="KW-0025">Alternative splicing</keyword>
<keyword id="KW-0175">Coiled coil</keyword>
<keyword id="KW-1017">Isopeptide bond</keyword>
<keyword id="KW-0507">mRNA processing</keyword>
<keyword id="KW-0508">mRNA splicing</keyword>
<keyword id="KW-0539">Nucleus</keyword>
<keyword id="KW-1267">Proteomics identification</keyword>
<keyword id="KW-1185">Reference proteome</keyword>
<keyword id="KW-0747">Spliceosome</keyword>
<keyword id="KW-0832">Ubl conjugation</keyword>
<organism>
    <name type="scientific">Homo sapiens</name>
    <name type="common">Human</name>
    <dbReference type="NCBI Taxonomy" id="9606"/>
    <lineage>
        <taxon>Eukaryota</taxon>
        <taxon>Metazoa</taxon>
        <taxon>Chordata</taxon>
        <taxon>Craniata</taxon>
        <taxon>Vertebrata</taxon>
        <taxon>Euteleostomi</taxon>
        <taxon>Mammalia</taxon>
        <taxon>Eutheria</taxon>
        <taxon>Euarchontoglires</taxon>
        <taxon>Primates</taxon>
        <taxon>Haplorrhini</taxon>
        <taxon>Catarrhini</taxon>
        <taxon>Hominidae</taxon>
        <taxon>Homo</taxon>
    </lineage>
</organism>
<reference key="1">
    <citation type="journal article" date="2000" name="Biochem. Biophys. Res. Commun.">
        <title>p29, a novel GCIP-interacting protein, localizes in the nucleus.</title>
        <authorList>
            <person name="Chang M.-S."/>
            <person name="Chang C.-L."/>
            <person name="Huang C.-J."/>
            <person name="Yang Y.-C."/>
        </authorList>
    </citation>
    <scope>NUCLEOTIDE SEQUENCE [MRNA] (ISOFORM 1)</scope>
    <scope>SUBCELLULAR LOCATION</scope>
    <scope>TISSUE SPECIFICITY</scope>
    <scope>INTERACTION WITH CCNDBP1</scope>
</reference>
<reference key="2">
    <citation type="journal article" date="2001" name="Genome Res.">
        <title>Towards a catalog of human genes and proteins: sequencing and analysis of 500 novel complete protein coding human cDNAs.</title>
        <authorList>
            <person name="Wiemann S."/>
            <person name="Weil B."/>
            <person name="Wellenreuther R."/>
            <person name="Gassenhuber J."/>
            <person name="Glassl S."/>
            <person name="Ansorge W."/>
            <person name="Boecher M."/>
            <person name="Bloecker H."/>
            <person name="Bauersachs S."/>
            <person name="Blum H."/>
            <person name="Lauber J."/>
            <person name="Duesterhoeft A."/>
            <person name="Beyer A."/>
            <person name="Koehrer K."/>
            <person name="Strack N."/>
            <person name="Mewes H.-W."/>
            <person name="Ottenwaelder B."/>
            <person name="Obermaier B."/>
            <person name="Tampe J."/>
            <person name="Heubner D."/>
            <person name="Wambutt R."/>
            <person name="Korn B."/>
            <person name="Klein M."/>
            <person name="Poustka A."/>
        </authorList>
    </citation>
    <scope>NUCLEOTIDE SEQUENCE [LARGE SCALE MRNA] (ISOFORM 1)</scope>
    <source>
        <tissue>Brain</tissue>
    </source>
</reference>
<reference key="3">
    <citation type="journal article" date="2006" name="Nature">
        <title>The DNA sequence and biological annotation of human chromosome 1.</title>
        <authorList>
            <person name="Gregory S.G."/>
            <person name="Barlow K.F."/>
            <person name="McLay K.E."/>
            <person name="Kaul R."/>
            <person name="Swarbreck D."/>
            <person name="Dunham A."/>
            <person name="Scott C.E."/>
            <person name="Howe K.L."/>
            <person name="Woodfine K."/>
            <person name="Spencer C.C.A."/>
            <person name="Jones M.C."/>
            <person name="Gillson C."/>
            <person name="Searle S."/>
            <person name="Zhou Y."/>
            <person name="Kokocinski F."/>
            <person name="McDonald L."/>
            <person name="Evans R."/>
            <person name="Phillips K."/>
            <person name="Atkinson A."/>
            <person name="Cooper R."/>
            <person name="Jones C."/>
            <person name="Hall R.E."/>
            <person name="Andrews T.D."/>
            <person name="Lloyd C."/>
            <person name="Ainscough R."/>
            <person name="Almeida J.P."/>
            <person name="Ambrose K.D."/>
            <person name="Anderson F."/>
            <person name="Andrew R.W."/>
            <person name="Ashwell R.I.S."/>
            <person name="Aubin K."/>
            <person name="Babbage A.K."/>
            <person name="Bagguley C.L."/>
            <person name="Bailey J."/>
            <person name="Beasley H."/>
            <person name="Bethel G."/>
            <person name="Bird C.P."/>
            <person name="Bray-Allen S."/>
            <person name="Brown J.Y."/>
            <person name="Brown A.J."/>
            <person name="Buckley D."/>
            <person name="Burton J."/>
            <person name="Bye J."/>
            <person name="Carder C."/>
            <person name="Chapman J.C."/>
            <person name="Clark S.Y."/>
            <person name="Clarke G."/>
            <person name="Clee C."/>
            <person name="Cobley V."/>
            <person name="Collier R.E."/>
            <person name="Corby N."/>
            <person name="Coville G.J."/>
            <person name="Davies J."/>
            <person name="Deadman R."/>
            <person name="Dunn M."/>
            <person name="Earthrowl M."/>
            <person name="Ellington A.G."/>
            <person name="Errington H."/>
            <person name="Frankish A."/>
            <person name="Frankland J."/>
            <person name="French L."/>
            <person name="Garner P."/>
            <person name="Garnett J."/>
            <person name="Gay L."/>
            <person name="Ghori M.R.J."/>
            <person name="Gibson R."/>
            <person name="Gilby L.M."/>
            <person name="Gillett W."/>
            <person name="Glithero R.J."/>
            <person name="Grafham D.V."/>
            <person name="Griffiths C."/>
            <person name="Griffiths-Jones S."/>
            <person name="Grocock R."/>
            <person name="Hammond S."/>
            <person name="Harrison E.S.I."/>
            <person name="Hart E."/>
            <person name="Haugen E."/>
            <person name="Heath P.D."/>
            <person name="Holmes S."/>
            <person name="Holt K."/>
            <person name="Howden P.J."/>
            <person name="Hunt A.R."/>
            <person name="Hunt S.E."/>
            <person name="Hunter G."/>
            <person name="Isherwood J."/>
            <person name="James R."/>
            <person name="Johnson C."/>
            <person name="Johnson D."/>
            <person name="Joy A."/>
            <person name="Kay M."/>
            <person name="Kershaw J.K."/>
            <person name="Kibukawa M."/>
            <person name="Kimberley A.M."/>
            <person name="King A."/>
            <person name="Knights A.J."/>
            <person name="Lad H."/>
            <person name="Laird G."/>
            <person name="Lawlor S."/>
            <person name="Leongamornlert D.A."/>
            <person name="Lloyd D.M."/>
            <person name="Loveland J."/>
            <person name="Lovell J."/>
            <person name="Lush M.J."/>
            <person name="Lyne R."/>
            <person name="Martin S."/>
            <person name="Mashreghi-Mohammadi M."/>
            <person name="Matthews L."/>
            <person name="Matthews N.S.W."/>
            <person name="McLaren S."/>
            <person name="Milne S."/>
            <person name="Mistry S."/>
            <person name="Moore M.J.F."/>
            <person name="Nickerson T."/>
            <person name="O'Dell C.N."/>
            <person name="Oliver K."/>
            <person name="Palmeiri A."/>
            <person name="Palmer S.A."/>
            <person name="Parker A."/>
            <person name="Patel D."/>
            <person name="Pearce A.V."/>
            <person name="Peck A.I."/>
            <person name="Pelan S."/>
            <person name="Phelps K."/>
            <person name="Phillimore B.J."/>
            <person name="Plumb R."/>
            <person name="Rajan J."/>
            <person name="Raymond C."/>
            <person name="Rouse G."/>
            <person name="Saenphimmachak C."/>
            <person name="Sehra H.K."/>
            <person name="Sheridan E."/>
            <person name="Shownkeen R."/>
            <person name="Sims S."/>
            <person name="Skuce C.D."/>
            <person name="Smith M."/>
            <person name="Steward C."/>
            <person name="Subramanian S."/>
            <person name="Sycamore N."/>
            <person name="Tracey A."/>
            <person name="Tromans A."/>
            <person name="Van Helmond Z."/>
            <person name="Wall M."/>
            <person name="Wallis J.M."/>
            <person name="White S."/>
            <person name="Whitehead S.L."/>
            <person name="Wilkinson J.E."/>
            <person name="Willey D.L."/>
            <person name="Williams H."/>
            <person name="Wilming L."/>
            <person name="Wray P.W."/>
            <person name="Wu Z."/>
            <person name="Coulson A."/>
            <person name="Vaudin M."/>
            <person name="Sulston J.E."/>
            <person name="Durbin R.M."/>
            <person name="Hubbard T."/>
            <person name="Wooster R."/>
            <person name="Dunham I."/>
            <person name="Carter N.P."/>
            <person name="McVean G."/>
            <person name="Ross M.T."/>
            <person name="Harrow J."/>
            <person name="Olson M.V."/>
            <person name="Beck S."/>
            <person name="Rogers J."/>
            <person name="Bentley D.R."/>
        </authorList>
    </citation>
    <scope>NUCLEOTIDE SEQUENCE [LARGE SCALE GENOMIC DNA]</scope>
</reference>
<reference key="4">
    <citation type="journal article" date="2004" name="Genome Res.">
        <title>The status, quality, and expansion of the NIH full-length cDNA project: the Mammalian Gene Collection (MGC).</title>
        <authorList>
            <consortium name="The MGC Project Team"/>
        </authorList>
    </citation>
    <scope>NUCLEOTIDE SEQUENCE [LARGE SCALE MRNA] (ISOFORM 1)</scope>
    <source>
        <tissue>Lung</tissue>
    </source>
</reference>
<reference key="5">
    <citation type="journal article" date="2002" name="RNA">
        <title>Purification and characterization of native spliceosomes suitable for three-dimensional structural analysis.</title>
        <authorList>
            <person name="Jurica M.S."/>
            <person name="Licklider L.J."/>
            <person name="Gygi S.P."/>
            <person name="Grigorieff N."/>
            <person name="Moore M.J."/>
        </authorList>
    </citation>
    <scope>IDENTIFICATION BY MASS SPECTROMETRY</scope>
    <scope>IDENTIFICATION IN THE SPLICEOSOMAL C COMPLEX</scope>
    <scope>FUNCTION</scope>
    <scope>SUBCELLULAR LOCATION</scope>
    <scope>SUBUNIT</scope>
</reference>
<reference key="6">
    <citation type="journal article" date="2009" name="Anal. Chem.">
        <title>Lys-N and trypsin cover complementary parts of the phosphoproteome in a refined SCX-based approach.</title>
        <authorList>
            <person name="Gauci S."/>
            <person name="Helbig A.O."/>
            <person name="Slijper M."/>
            <person name="Krijgsveld J."/>
            <person name="Heck A.J."/>
            <person name="Mohammed S."/>
        </authorList>
    </citation>
    <scope>ACETYLATION [LARGE SCALE ANALYSIS] AT ALA-2</scope>
    <scope>CLEAVAGE OF INITIATOR METHIONINE [LARGE SCALE ANALYSIS]</scope>
    <scope>IDENTIFICATION BY MASS SPECTROMETRY [LARGE SCALE ANALYSIS]</scope>
</reference>
<reference key="7">
    <citation type="journal article" date="2012" name="Proc. Natl. Acad. Sci. U.S.A.">
        <title>N-terminal acetylome analyses and functional insights of the N-terminal acetyltransferase NatB.</title>
        <authorList>
            <person name="Van Damme P."/>
            <person name="Lasa M."/>
            <person name="Polevoda B."/>
            <person name="Gazquez C."/>
            <person name="Elosegui-Artola A."/>
            <person name="Kim D.S."/>
            <person name="De Juan-Pardo E."/>
            <person name="Demeyer K."/>
            <person name="Hole K."/>
            <person name="Larrea E."/>
            <person name="Timmerman E."/>
            <person name="Prieto J."/>
            <person name="Arnesen T."/>
            <person name="Sherman F."/>
            <person name="Gevaert K."/>
            <person name="Aldabe R."/>
        </authorList>
    </citation>
    <scope>ACETYLATION [LARGE SCALE ANALYSIS] AT ALA-2</scope>
    <scope>CLEAVAGE OF INITIATOR METHIONINE [LARGE SCALE ANALYSIS]</scope>
    <scope>IDENTIFICATION BY MASS SPECTROMETRY [LARGE SCALE ANALYSIS]</scope>
</reference>
<reference key="8">
    <citation type="journal article" date="2017" name="Nat. Struct. Mol. Biol.">
        <title>Site-specific mapping of the human SUMO proteome reveals co-modification with phosphorylation.</title>
        <authorList>
            <person name="Hendriks I.A."/>
            <person name="Lyon D."/>
            <person name="Young C."/>
            <person name="Jensen L.J."/>
            <person name="Vertegaal A.C."/>
            <person name="Nielsen M.L."/>
        </authorList>
    </citation>
    <scope>SUMOYLATION [LARGE SCALE ANALYSIS] AT LYS-143 AND LYS-234</scope>
    <scope>IDENTIFICATION BY MASS SPECTROMETRY [LARGE SCALE ANALYSIS]</scope>
</reference>
<reference evidence="9" key="9">
    <citation type="journal article" date="2017" name="Cell">
        <title>An Atomic Structure of the Human Spliceosome.</title>
        <authorList>
            <person name="Zhang X."/>
            <person name="Yan C."/>
            <person name="Hang J."/>
            <person name="Finci L.I."/>
            <person name="Lei J."/>
            <person name="Shi Y."/>
        </authorList>
    </citation>
    <scope>STRUCTURE BY ELECTRON MICROSCOPY (3.60 ANGSTROMS)</scope>
    <scope>FUNCTION</scope>
    <scope>SUBUNIT</scope>
    <scope>SUBCELLULAR LOCATION</scope>
</reference>
<reference evidence="8" key="10">
    <citation type="journal article" date="2017" name="Nature">
        <title>Cryo-EM structure of a human spliceosome activated for step 2 of splicing.</title>
        <authorList>
            <person name="Bertram K."/>
            <person name="Agafonov D.E."/>
            <person name="Liu W.T."/>
            <person name="Dybkov O."/>
            <person name="Will C.L."/>
            <person name="Hartmuth K."/>
            <person name="Urlaub H."/>
            <person name="Kastner B."/>
            <person name="Stark H."/>
            <person name="Luhrmann R."/>
        </authorList>
    </citation>
    <scope>STRUCTURE BY ELECTRON MICROSCOPY (5.90 ANGSTROMS)</scope>
    <scope>FUNCTION</scope>
    <scope>SUBUNIT</scope>
    <scope>SUBCELLULAR LOCATION</scope>
    <scope>IDENTIFICATION BY MASS SPECTROMETRY</scope>
</reference>
<proteinExistence type="evidence at protein level"/>
<dbReference type="EMBL" id="AF273089">
    <property type="protein sequence ID" value="AAG42073.1"/>
    <property type="molecule type" value="mRNA"/>
</dbReference>
<dbReference type="EMBL" id="AL080166">
    <property type="protein sequence ID" value="CAB45754.1"/>
    <property type="molecule type" value="mRNA"/>
</dbReference>
<dbReference type="EMBL" id="AL031432">
    <property type="status" value="NOT_ANNOTATED_CDS"/>
    <property type="molecule type" value="Genomic_DNA"/>
</dbReference>
<dbReference type="EMBL" id="BC010862">
    <property type="protein sequence ID" value="AAH10862.1"/>
    <property type="molecule type" value="mRNA"/>
</dbReference>
<dbReference type="CCDS" id="CCDS258.1">
    <molecule id="O95926-2"/>
</dbReference>
<dbReference type="CCDS" id="CCDS259.1">
    <molecule id="O95926-1"/>
</dbReference>
<dbReference type="PIR" id="T12485">
    <property type="entry name" value="T12485"/>
</dbReference>
<dbReference type="RefSeq" id="NP_056299.1">
    <molecule id="O95926-1"/>
    <property type="nucleotide sequence ID" value="NM_015484.5"/>
</dbReference>
<dbReference type="RefSeq" id="NP_997053.1">
    <molecule id="O95926-2"/>
    <property type="nucleotide sequence ID" value="NM_207170.4"/>
</dbReference>
<dbReference type="PDB" id="5MQF">
    <property type="method" value="EM"/>
    <property type="resolution" value="5.90 A"/>
    <property type="chains" value="N=1-243"/>
</dbReference>
<dbReference type="PDB" id="5XJC">
    <property type="method" value="EM"/>
    <property type="resolution" value="3.60 A"/>
    <property type="chains" value="M=1-243"/>
</dbReference>
<dbReference type="PDB" id="5YZG">
    <property type="method" value="EM"/>
    <property type="resolution" value="4.10 A"/>
    <property type="chains" value="M=1-243"/>
</dbReference>
<dbReference type="PDB" id="6ICZ">
    <property type="method" value="EM"/>
    <property type="resolution" value="3.00 A"/>
    <property type="chains" value="M=1-243"/>
</dbReference>
<dbReference type="PDB" id="6ID0">
    <property type="method" value="EM"/>
    <property type="resolution" value="2.90 A"/>
    <property type="chains" value="M=1-243"/>
</dbReference>
<dbReference type="PDB" id="6ID1">
    <property type="method" value="EM"/>
    <property type="resolution" value="2.86 A"/>
    <property type="chains" value="M=1-243"/>
</dbReference>
<dbReference type="PDB" id="6QDV">
    <property type="method" value="EM"/>
    <property type="resolution" value="3.30 A"/>
    <property type="chains" value="y=100-239"/>
</dbReference>
<dbReference type="PDB" id="7A5P">
    <property type="method" value="EM"/>
    <property type="resolution" value="5.00 A"/>
    <property type="chains" value="N=1-243"/>
</dbReference>
<dbReference type="PDB" id="7W59">
    <property type="method" value="EM"/>
    <property type="resolution" value="3.60 A"/>
    <property type="chains" value="M=1-243"/>
</dbReference>
<dbReference type="PDB" id="7W5A">
    <property type="method" value="EM"/>
    <property type="resolution" value="3.60 A"/>
    <property type="chains" value="M=1-243"/>
</dbReference>
<dbReference type="PDB" id="7W5B">
    <property type="method" value="EM"/>
    <property type="resolution" value="4.30 A"/>
    <property type="chains" value="M=1-243"/>
</dbReference>
<dbReference type="PDB" id="8C6J">
    <property type="method" value="EM"/>
    <property type="resolution" value="2.80 A"/>
    <property type="chains" value="y=1-243"/>
</dbReference>
<dbReference type="PDB" id="8I0U">
    <property type="method" value="EM"/>
    <property type="resolution" value="3.30 A"/>
    <property type="chains" value="M=1-243"/>
</dbReference>
<dbReference type="PDB" id="8I0V">
    <property type="method" value="EM"/>
    <property type="resolution" value="3.00 A"/>
    <property type="chains" value="M=1-243"/>
</dbReference>
<dbReference type="PDB" id="8I0W">
    <property type="method" value="EM"/>
    <property type="resolution" value="3.40 A"/>
    <property type="chains" value="M=1-243"/>
</dbReference>
<dbReference type="PDB" id="8RO2">
    <property type="method" value="EM"/>
    <property type="resolution" value="3.50 A"/>
    <property type="chains" value="M=1-243"/>
</dbReference>
<dbReference type="PDB" id="9FMD">
    <property type="method" value="EM"/>
    <property type="resolution" value="3.30 A"/>
    <property type="chains" value="M=1-243"/>
</dbReference>
<dbReference type="PDBsum" id="5MQF"/>
<dbReference type="PDBsum" id="5XJC"/>
<dbReference type="PDBsum" id="5YZG"/>
<dbReference type="PDBsum" id="6ICZ"/>
<dbReference type="PDBsum" id="6ID0"/>
<dbReference type="PDBsum" id="6ID1"/>
<dbReference type="PDBsum" id="6QDV"/>
<dbReference type="PDBsum" id="7A5P"/>
<dbReference type="PDBsum" id="7W59"/>
<dbReference type="PDBsum" id="7W5A"/>
<dbReference type="PDBsum" id="7W5B"/>
<dbReference type="PDBsum" id="8C6J"/>
<dbReference type="PDBsum" id="8I0U"/>
<dbReference type="PDBsum" id="8I0V"/>
<dbReference type="PDBsum" id="8I0W"/>
<dbReference type="PDBsum" id="8RO2"/>
<dbReference type="PDBsum" id="9FMD"/>
<dbReference type="EMDB" id="EMD-16452"/>
<dbReference type="EMDB" id="EMD-19399"/>
<dbReference type="EMDB" id="EMD-32317"/>
<dbReference type="EMDB" id="EMD-32319"/>
<dbReference type="EMDB" id="EMD-32321"/>
<dbReference type="EMDB" id="EMD-35110"/>
<dbReference type="EMDB" id="EMD-35111"/>
<dbReference type="EMDB" id="EMD-35113"/>
<dbReference type="EMDB" id="EMD-3545"/>
<dbReference type="EMDB" id="EMD-4525"/>
<dbReference type="EMDB" id="EMD-6721"/>
<dbReference type="EMDB" id="EMD-6864"/>
<dbReference type="EMDB" id="EMD-9645"/>
<dbReference type="EMDB" id="EMD-9646"/>
<dbReference type="EMDB" id="EMD-9647"/>
<dbReference type="SMR" id="O95926"/>
<dbReference type="BioGRID" id="117444">
    <property type="interactions" value="85"/>
</dbReference>
<dbReference type="CORUM" id="O95926"/>
<dbReference type="FunCoup" id="O95926">
    <property type="interactions" value="2427"/>
</dbReference>
<dbReference type="IntAct" id="O95926">
    <property type="interactions" value="58"/>
</dbReference>
<dbReference type="MINT" id="O95926"/>
<dbReference type="STRING" id="9606.ENSP00000236273"/>
<dbReference type="iPTMnet" id="O95926"/>
<dbReference type="PhosphoSitePlus" id="O95926"/>
<dbReference type="BioMuta" id="SYF2"/>
<dbReference type="jPOST" id="O95926"/>
<dbReference type="MassIVE" id="O95926"/>
<dbReference type="PaxDb" id="9606-ENSP00000236273"/>
<dbReference type="PeptideAtlas" id="O95926"/>
<dbReference type="ProteomicsDB" id="51130">
    <molecule id="O95926-1"/>
</dbReference>
<dbReference type="Pumba" id="O95926"/>
<dbReference type="Antibodypedia" id="34977">
    <property type="antibodies" value="201 antibodies from 31 providers"/>
</dbReference>
<dbReference type="DNASU" id="25949"/>
<dbReference type="Ensembl" id="ENST00000236273.9">
    <molecule id="O95926-1"/>
    <property type="protein sequence ID" value="ENSP00000236273.4"/>
    <property type="gene ID" value="ENSG00000117614.10"/>
</dbReference>
<dbReference type="Ensembl" id="ENST00000354361.3">
    <molecule id="O95926-2"/>
    <property type="protein sequence ID" value="ENSP00000346330.3"/>
    <property type="gene ID" value="ENSG00000117614.10"/>
</dbReference>
<dbReference type="GeneID" id="25949"/>
<dbReference type="KEGG" id="hsa:25949"/>
<dbReference type="MANE-Select" id="ENST00000236273.9">
    <property type="protein sequence ID" value="ENSP00000236273.4"/>
    <property type="RefSeq nucleotide sequence ID" value="NM_015484.5"/>
    <property type="RefSeq protein sequence ID" value="NP_056299.1"/>
</dbReference>
<dbReference type="UCSC" id="uc001bjt.2">
    <molecule id="O95926-1"/>
    <property type="organism name" value="human"/>
</dbReference>
<dbReference type="AGR" id="HGNC:19824"/>
<dbReference type="CTD" id="25949"/>
<dbReference type="DisGeNET" id="25949"/>
<dbReference type="GeneCards" id="SYF2"/>
<dbReference type="HGNC" id="HGNC:19824">
    <property type="gene designation" value="SYF2"/>
</dbReference>
<dbReference type="HPA" id="ENSG00000117614">
    <property type="expression patterns" value="Low tissue specificity"/>
</dbReference>
<dbReference type="MIM" id="607090">
    <property type="type" value="gene"/>
</dbReference>
<dbReference type="neXtProt" id="NX_O95926"/>
<dbReference type="OpenTargets" id="ENSG00000117614"/>
<dbReference type="PharmGKB" id="PA142670853"/>
<dbReference type="VEuPathDB" id="HostDB:ENSG00000117614"/>
<dbReference type="eggNOG" id="KOG2609">
    <property type="taxonomic scope" value="Eukaryota"/>
</dbReference>
<dbReference type="GeneTree" id="ENSGT00390000017845"/>
<dbReference type="HOGENOM" id="CLU_051065_3_0_1"/>
<dbReference type="InParanoid" id="O95926"/>
<dbReference type="OMA" id="RRRMHND"/>
<dbReference type="OrthoDB" id="199717at2759"/>
<dbReference type="PAN-GO" id="O95926">
    <property type="GO annotations" value="3 GO annotations based on evolutionary models"/>
</dbReference>
<dbReference type="PhylomeDB" id="O95926"/>
<dbReference type="TreeFam" id="TF313041"/>
<dbReference type="PathwayCommons" id="O95926"/>
<dbReference type="Reactome" id="R-HSA-72163">
    <property type="pathway name" value="mRNA Splicing - Major Pathway"/>
</dbReference>
<dbReference type="SignaLink" id="O95926"/>
<dbReference type="BioGRID-ORCS" id="25949">
    <property type="hits" value="658 hits in 1166 CRISPR screens"/>
</dbReference>
<dbReference type="ChiTaRS" id="SYF2">
    <property type="organism name" value="human"/>
</dbReference>
<dbReference type="GenomeRNAi" id="25949"/>
<dbReference type="Pharos" id="O95926">
    <property type="development level" value="Tbio"/>
</dbReference>
<dbReference type="PRO" id="PR:O95926"/>
<dbReference type="Proteomes" id="UP000005640">
    <property type="component" value="Chromosome 1"/>
</dbReference>
<dbReference type="RNAct" id="O95926">
    <property type="molecule type" value="protein"/>
</dbReference>
<dbReference type="Bgee" id="ENSG00000117614">
    <property type="expression patterns" value="Expressed in calcaneal tendon and 208 other cell types or tissues"/>
</dbReference>
<dbReference type="GO" id="GO:0071013">
    <property type="term" value="C:catalytic step 2 spliceosome"/>
    <property type="evidence" value="ECO:0000314"/>
    <property type="project" value="UniProtKB"/>
</dbReference>
<dbReference type="GO" id="GO:0016607">
    <property type="term" value="C:nuclear speck"/>
    <property type="evidence" value="ECO:0000314"/>
    <property type="project" value="HPA"/>
</dbReference>
<dbReference type="GO" id="GO:0005654">
    <property type="term" value="C:nucleoplasm"/>
    <property type="evidence" value="ECO:0000304"/>
    <property type="project" value="Reactome"/>
</dbReference>
<dbReference type="GO" id="GO:0005634">
    <property type="term" value="C:nucleus"/>
    <property type="evidence" value="ECO:0000314"/>
    <property type="project" value="UniProtKB"/>
</dbReference>
<dbReference type="GO" id="GO:0071014">
    <property type="term" value="C:post-mRNA release spliceosomal complex"/>
    <property type="evidence" value="ECO:0000318"/>
    <property type="project" value="GO_Central"/>
</dbReference>
<dbReference type="GO" id="GO:0000974">
    <property type="term" value="C:Prp19 complex"/>
    <property type="evidence" value="ECO:0000318"/>
    <property type="project" value="GO_Central"/>
</dbReference>
<dbReference type="GO" id="GO:0071007">
    <property type="term" value="C:U2-type catalytic step 2 spliceosome"/>
    <property type="evidence" value="ECO:0000314"/>
    <property type="project" value="UniProtKB"/>
</dbReference>
<dbReference type="GO" id="GO:0003723">
    <property type="term" value="F:RNA binding"/>
    <property type="evidence" value="ECO:0007005"/>
    <property type="project" value="UniProtKB"/>
</dbReference>
<dbReference type="GO" id="GO:0048568">
    <property type="term" value="P:embryonic organ development"/>
    <property type="evidence" value="ECO:0007669"/>
    <property type="project" value="Ensembl"/>
</dbReference>
<dbReference type="GO" id="GO:0007369">
    <property type="term" value="P:gastrulation"/>
    <property type="evidence" value="ECO:0007669"/>
    <property type="project" value="Ensembl"/>
</dbReference>
<dbReference type="GO" id="GO:0001701">
    <property type="term" value="P:in utero embryonic development"/>
    <property type="evidence" value="ECO:0007669"/>
    <property type="project" value="Ensembl"/>
</dbReference>
<dbReference type="GO" id="GO:0007095">
    <property type="term" value="P:mitotic G2 DNA damage checkpoint signaling"/>
    <property type="evidence" value="ECO:0007669"/>
    <property type="project" value="Ensembl"/>
</dbReference>
<dbReference type="GO" id="GO:0000398">
    <property type="term" value="P:mRNA splicing, via spliceosome"/>
    <property type="evidence" value="ECO:0000314"/>
    <property type="project" value="UniProtKB"/>
</dbReference>
<dbReference type="GO" id="GO:0008284">
    <property type="term" value="P:positive regulation of cell population proliferation"/>
    <property type="evidence" value="ECO:0007669"/>
    <property type="project" value="Ensembl"/>
</dbReference>
<dbReference type="InterPro" id="IPR013260">
    <property type="entry name" value="mRNA_splic_SYF2"/>
</dbReference>
<dbReference type="PANTHER" id="PTHR13264">
    <property type="entry name" value="GCIP-INTERACTING PROTEIN P29"/>
    <property type="match status" value="1"/>
</dbReference>
<dbReference type="PANTHER" id="PTHR13264:SF5">
    <property type="entry name" value="PRE-MRNA-SPLICING FACTOR SYF2"/>
    <property type="match status" value="1"/>
</dbReference>
<dbReference type="Pfam" id="PF08231">
    <property type="entry name" value="SYF2"/>
    <property type="match status" value="1"/>
</dbReference>
<protein>
    <recommendedName>
        <fullName>Pre-mRNA-splicing factor SYF2</fullName>
    </recommendedName>
    <alternativeName>
        <fullName>CCNDBP1-interactor</fullName>
    </alternativeName>
    <alternativeName>
        <fullName evidence="6">p29</fullName>
    </alternativeName>
</protein>
<sequence>MAAIAASEVLVDSAEEGSLAAAAELAAQKREQRLRKFRELHLMRNEARKLNHQEVVEEDKRLKLPANWEAKKARLEWELKEEEKKKECAARGEDYEKVKLLEISAEDAERWERKKKRKNPDLGFSDYAAAQLRQYHRLTKQIKPDMETYERLREKHGEEFFPTSNSLLHGTHVPSTEEIDRMVIDLEKQIEKRDKYSRRRPYNDDADIDYINERNAKFNKKAERFYGKYTAEIKQNLERGTAV</sequence>
<evidence type="ECO:0000255" key="1"/>
<evidence type="ECO:0000269" key="2">
    <source>
    </source>
</evidence>
<evidence type="ECO:0000269" key="3">
    <source>
    </source>
</evidence>
<evidence type="ECO:0000269" key="4">
    <source>
    </source>
</evidence>
<evidence type="ECO:0000269" key="5">
    <source>
    </source>
</evidence>
<evidence type="ECO:0000303" key="6">
    <source>
    </source>
</evidence>
<evidence type="ECO:0000305" key="7"/>
<evidence type="ECO:0007744" key="8">
    <source>
        <dbReference type="PDB" id="5MQF"/>
    </source>
</evidence>
<evidence type="ECO:0007744" key="9">
    <source>
        <dbReference type="PDB" id="5XJC"/>
    </source>
</evidence>
<evidence type="ECO:0007744" key="10">
    <source>
    </source>
</evidence>
<evidence type="ECO:0007744" key="11">
    <source>
    </source>
</evidence>
<evidence type="ECO:0007744" key="12">
    <source>
    </source>
</evidence>
<evidence type="ECO:0007829" key="13">
    <source>
        <dbReference type="PDB" id="6ICZ"/>
    </source>
</evidence>
<evidence type="ECO:0007829" key="14">
    <source>
        <dbReference type="PDB" id="6ID1"/>
    </source>
</evidence>
<gene>
    <name type="primary">SYF2</name>
    <name type="synonym">CBPIN</name>
    <name type="synonym">GCIPIP</name>
</gene>
<feature type="initiator methionine" description="Removed" evidence="10 11">
    <location>
        <position position="1"/>
    </location>
</feature>
<feature type="chain" id="PRO_0000250376" description="Pre-mRNA-splicing factor SYF2">
    <location>
        <begin position="2"/>
        <end position="243"/>
    </location>
</feature>
<feature type="coiled-coil region" evidence="1">
    <location>
        <begin position="66"/>
        <end position="91"/>
    </location>
</feature>
<feature type="modified residue" description="N-acetylalanine" evidence="10 11">
    <location>
        <position position="2"/>
    </location>
</feature>
<feature type="cross-link" description="Glycyl lysine isopeptide (Lys-Gly) (interchain with G-Cter in SUMO2)" evidence="12">
    <location>
        <position position="143"/>
    </location>
</feature>
<feature type="cross-link" description="Glycyl lysine isopeptide (Lys-Gly) (interchain with G-Cter in SUMO2)" evidence="12">
    <location>
        <position position="234"/>
    </location>
</feature>
<feature type="splice variant" id="VSP_054802" description="In isoform 2." evidence="7">
    <location>
        <begin position="45"/>
        <end position="86"/>
    </location>
</feature>
<feature type="sequence variant" id="VAR_062162" description="In dbSNP:rs35324907.">
    <original>A</original>
    <variation>V</variation>
    <location>
        <position position="89"/>
    </location>
</feature>
<feature type="helix" evidence="14">
    <location>
        <begin position="127"/>
        <end position="141"/>
    </location>
</feature>
<feature type="helix" evidence="14">
    <location>
        <begin position="146"/>
        <end position="156"/>
    </location>
</feature>
<feature type="helix" evidence="14">
    <location>
        <begin position="157"/>
        <end position="160"/>
    </location>
</feature>
<feature type="strand" evidence="13">
    <location>
        <begin position="164"/>
        <end position="167"/>
    </location>
</feature>
<feature type="helix" evidence="14">
    <location>
        <begin position="176"/>
        <end position="194"/>
    </location>
</feature>
<feature type="strand" evidence="14">
    <location>
        <begin position="211"/>
        <end position="213"/>
    </location>
</feature>
<feature type="helix" evidence="14">
    <location>
        <begin position="214"/>
        <end position="225"/>
    </location>
</feature>
<feature type="turn" evidence="14">
    <location>
        <begin position="226"/>
        <end position="229"/>
    </location>
</feature>
<feature type="helix" evidence="14">
    <location>
        <begin position="233"/>
        <end position="238"/>
    </location>
</feature>
<name>SYF2_HUMAN</name>
<accession>O95926</accession>
<accession>Q5TH73</accession>
<comment type="function">
    <text evidence="3 4 5">Involved in pre-mRNA splicing as component of the spliceosome (PubMed:11991638, PubMed:28076346, PubMed:28502770).</text>
</comment>
<comment type="subunit">
    <text evidence="2 3 4 5">Identified in the spliceosome C complex (PubMed:11991638, PubMed:28076346, PubMed:28502770). Interacts with CCNDBP1 (PubMed:11118353).</text>
</comment>
<comment type="interaction">
    <interactant intactId="EBI-2557644">
        <id>O95926</id>
    </interactant>
    <interactant intactId="EBI-742909">
        <id>Q9H6L4</id>
        <label>ARMC7</label>
    </interactant>
    <organismsDiffer>false</organismsDiffer>
    <experiments>3</experiments>
</comment>
<comment type="interaction">
    <interactant intactId="EBI-2557644">
        <id>O95926</id>
    </interactant>
    <interactant intactId="EBI-748961">
        <id>O95273</id>
        <label>CCNDBP1</label>
    </interactant>
    <organismsDiffer>false</organismsDiffer>
    <experiments>3</experiments>
</comment>
<comment type="interaction">
    <interactant intactId="EBI-2557644">
        <id>O95926</id>
    </interactant>
    <interactant intactId="EBI-744248">
        <id>P40692</id>
        <label>MLH1</label>
    </interactant>
    <organismsDiffer>false</organismsDiffer>
    <experiments>3</experiments>
</comment>
<comment type="subcellular location">
    <subcellularLocation>
        <location evidence="2 3 4 5">Nucleus</location>
    </subcellularLocation>
</comment>
<comment type="alternative products">
    <event type="alternative splicing"/>
    <isoform>
        <id>O95926-1</id>
        <name>1</name>
        <sequence type="displayed"/>
    </isoform>
    <isoform>
        <id>O95926-2</id>
        <name>2</name>
        <sequence type="described" ref="VSP_054802"/>
    </isoform>
</comment>
<comment type="tissue specificity">
    <text evidence="2">Abundantly expressed in the heart, skeletal muscle and kidney. Expressed at lower level other tissues.</text>
</comment>
<comment type="similarity">
    <text evidence="7">Belongs to the SYF2 family.</text>
</comment>